<proteinExistence type="evidence at protein level"/>
<accession>Q9BXQ6</accession>
<accession>A8MYY1</accession>
<evidence type="ECO:0000250" key="1">
    <source>
        <dbReference type="UniProtKB" id="Q99MX7"/>
    </source>
</evidence>
<evidence type="ECO:0000256" key="2">
    <source>
        <dbReference type="SAM" id="MobiDB-lite"/>
    </source>
</evidence>
<evidence type="ECO:0000303" key="3">
    <source>
    </source>
</evidence>
<evidence type="ECO:0000303" key="4">
    <source>
    </source>
</evidence>
<evidence type="ECO:0000305" key="5"/>
<evidence type="ECO:0000305" key="6">
    <source>
    </source>
</evidence>
<evidence type="ECO:0000312" key="7">
    <source>
        <dbReference type="HGNC" id="HGNC:1844"/>
    </source>
</evidence>
<dbReference type="EMBL" id="AF307451">
    <property type="protein sequence ID" value="AAK30049.1"/>
    <property type="molecule type" value="mRNA"/>
</dbReference>
<dbReference type="EMBL" id="AK095609">
    <property type="status" value="NOT_ANNOTATED_CDS"/>
    <property type="molecule type" value="mRNA"/>
</dbReference>
<dbReference type="EMBL" id="AC006946">
    <property type="status" value="NOT_ANNOTATED_CDS"/>
    <property type="molecule type" value="Genomic_DNA"/>
</dbReference>
<dbReference type="CCDS" id="CCDS13740.1">
    <molecule id="Q9BXQ6-1"/>
</dbReference>
<dbReference type="CCDS" id="CCDS54494.1">
    <molecule id="Q9BXQ6-2"/>
</dbReference>
<dbReference type="RefSeq" id="NP_001156551.1">
    <molecule id="Q9BXQ6-2"/>
    <property type="nucleotide sequence ID" value="NM_001163079.2"/>
</dbReference>
<dbReference type="RefSeq" id="NP_114096.1">
    <molecule id="Q9BXQ6-1"/>
    <property type="nucleotide sequence ID" value="NM_031890.4"/>
</dbReference>
<dbReference type="RefSeq" id="XP_011544426.1">
    <molecule id="Q9BXQ6-1"/>
    <property type="nucleotide sequence ID" value="XM_011546124.3"/>
</dbReference>
<dbReference type="RefSeq" id="XP_054181536.1">
    <molecule id="Q9BXQ6-1"/>
    <property type="nucleotide sequence ID" value="XM_054325561.1"/>
</dbReference>
<dbReference type="SMR" id="Q9BXQ6"/>
<dbReference type="BioGRID" id="118172">
    <property type="interactions" value="2"/>
</dbReference>
<dbReference type="FunCoup" id="Q9BXQ6">
    <property type="interactions" value="29"/>
</dbReference>
<dbReference type="STRING" id="9606.ENSP00000329318"/>
<dbReference type="GlyCosmos" id="Q9BXQ6">
    <property type="glycosylation" value="1 site, 1 glycan"/>
</dbReference>
<dbReference type="GlyGen" id="Q9BXQ6">
    <property type="glycosylation" value="1 site, 1 O-linked glycan (1 site)"/>
</dbReference>
<dbReference type="iPTMnet" id="Q9BXQ6"/>
<dbReference type="PhosphoSitePlus" id="Q9BXQ6"/>
<dbReference type="SwissPalm" id="Q9BXQ6"/>
<dbReference type="BioMuta" id="TMEM121B"/>
<dbReference type="DMDM" id="20177840"/>
<dbReference type="MassIVE" id="Q9BXQ6"/>
<dbReference type="PaxDb" id="9606-ENSP00000329318"/>
<dbReference type="PeptideAtlas" id="Q9BXQ6"/>
<dbReference type="ProteomicsDB" id="2436"/>
<dbReference type="ProteomicsDB" id="79482">
    <molecule id="Q9BXQ6-1"/>
</dbReference>
<dbReference type="Antibodypedia" id="22642">
    <property type="antibodies" value="112 antibodies from 16 providers"/>
</dbReference>
<dbReference type="DNASU" id="27439"/>
<dbReference type="Ensembl" id="ENST00000331437.4">
    <molecule id="Q9BXQ6-1"/>
    <property type="protein sequence ID" value="ENSP00000329318.3"/>
    <property type="gene ID" value="ENSG00000183307.4"/>
</dbReference>
<dbReference type="Ensembl" id="ENST00000399875.1">
    <molecule id="Q9BXQ6-2"/>
    <property type="protein sequence ID" value="ENSP00000382764.1"/>
    <property type="gene ID" value="ENSG00000183307.4"/>
</dbReference>
<dbReference type="GeneID" id="27439"/>
<dbReference type="KEGG" id="hsa:27439"/>
<dbReference type="MANE-Select" id="ENST00000331437.4">
    <property type="protein sequence ID" value="ENSP00000329318.3"/>
    <property type="RefSeq nucleotide sequence ID" value="NM_031890.4"/>
    <property type="RefSeq protein sequence ID" value="NP_114096.1"/>
</dbReference>
<dbReference type="UCSC" id="uc002zma.2">
    <molecule id="Q9BXQ6-1"/>
    <property type="organism name" value="human"/>
</dbReference>
<dbReference type="AGR" id="HGNC:1844"/>
<dbReference type="CTD" id="27439"/>
<dbReference type="DisGeNET" id="27439"/>
<dbReference type="GeneCards" id="TMEM121B"/>
<dbReference type="HGNC" id="HGNC:1844">
    <property type="gene designation" value="TMEM121B"/>
</dbReference>
<dbReference type="HPA" id="ENSG00000183307">
    <property type="expression patterns" value="Group enriched (brain, prostate)"/>
</dbReference>
<dbReference type="neXtProt" id="NX_Q9BXQ6"/>
<dbReference type="OpenTargets" id="ENSG00000183307"/>
<dbReference type="PharmGKB" id="PA26387"/>
<dbReference type="VEuPathDB" id="HostDB:ENSG00000183307"/>
<dbReference type="eggNOG" id="ENOG502R54H">
    <property type="taxonomic scope" value="Eukaryota"/>
</dbReference>
<dbReference type="GeneTree" id="ENSGT00940000154822"/>
<dbReference type="HOGENOM" id="CLU_071314_0_0_1"/>
<dbReference type="InParanoid" id="Q9BXQ6"/>
<dbReference type="OMA" id="HRVVSNQ"/>
<dbReference type="OrthoDB" id="5964337at2759"/>
<dbReference type="PAN-GO" id="Q9BXQ6">
    <property type="GO annotations" value="0 GO annotations based on evolutionary models"/>
</dbReference>
<dbReference type="PhylomeDB" id="Q9BXQ6"/>
<dbReference type="TreeFam" id="TF336944"/>
<dbReference type="PathwayCommons" id="Q9BXQ6"/>
<dbReference type="BioGRID-ORCS" id="27439">
    <property type="hits" value="11 hits in 1126 CRISPR screens"/>
</dbReference>
<dbReference type="GenomeRNAi" id="27439"/>
<dbReference type="Pharos" id="Q9BXQ6">
    <property type="development level" value="Tdark"/>
</dbReference>
<dbReference type="PRO" id="PR:Q9BXQ6"/>
<dbReference type="Proteomes" id="UP000005640">
    <property type="component" value="Chromosome 22"/>
</dbReference>
<dbReference type="RNAct" id="Q9BXQ6">
    <property type="molecule type" value="protein"/>
</dbReference>
<dbReference type="Bgee" id="ENSG00000183307">
    <property type="expression patterns" value="Expressed in cortical plate and 102 other cell types or tissues"/>
</dbReference>
<dbReference type="InterPro" id="IPR026624">
    <property type="entry name" value="CECR6"/>
</dbReference>
<dbReference type="InterPro" id="IPR032776">
    <property type="entry name" value="CECR6/TMEM121"/>
</dbReference>
<dbReference type="PANTHER" id="PTHR47399">
    <property type="entry name" value="TRANSMEMBRANE PROTEIN 121B"/>
    <property type="match status" value="1"/>
</dbReference>
<dbReference type="PANTHER" id="PTHR47399:SF1">
    <property type="entry name" value="TRANSMEMBRANE PROTEIN 121B"/>
    <property type="match status" value="1"/>
</dbReference>
<dbReference type="Pfam" id="PF14997">
    <property type="entry name" value="CECR6_TMEM121"/>
    <property type="match status" value="1"/>
</dbReference>
<reference key="1">
    <citation type="journal article" date="2001" name="Genome Res.">
        <title>Analysis of the cat eye syndrome critical region in humans and the region of conserved synteny in mice: a search for candidate genes at or near the human chromosome 22 pericentromere.</title>
        <authorList>
            <person name="Footz T.K."/>
            <person name="Brinkman-Mills P."/>
            <person name="Banting G.S."/>
            <person name="Maier S.A."/>
            <person name="Riazi M.A."/>
            <person name="Bridgland L.J."/>
            <person name="Hu S."/>
            <person name="Birren B."/>
            <person name="Minoshima S."/>
            <person name="Shimizu N."/>
            <person name="Pan H."/>
            <person name="Nguyen T."/>
            <person name="Fang F."/>
            <person name="Fu Y."/>
            <person name="Ray L."/>
            <person name="Wu H."/>
            <person name="Shaull S."/>
            <person name="Phan S."/>
            <person name="Yao Z."/>
            <person name="Chen F."/>
            <person name="Huan A."/>
            <person name="Hu P."/>
            <person name="Wang Q."/>
            <person name="Loh P."/>
            <person name="Qi S."/>
            <person name="Roe B.A."/>
            <person name="McDermid H.E."/>
        </authorList>
    </citation>
    <scope>NUCLEOTIDE SEQUENCE [MRNA] (ISOFORM 1)</scope>
</reference>
<reference key="2">
    <citation type="journal article" date="2004" name="Nat. Genet.">
        <title>Complete sequencing and characterization of 21,243 full-length human cDNAs.</title>
        <authorList>
            <person name="Ota T."/>
            <person name="Suzuki Y."/>
            <person name="Nishikawa T."/>
            <person name="Otsuki T."/>
            <person name="Sugiyama T."/>
            <person name="Irie R."/>
            <person name="Wakamatsu A."/>
            <person name="Hayashi K."/>
            <person name="Sato H."/>
            <person name="Nagai K."/>
            <person name="Kimura K."/>
            <person name="Makita H."/>
            <person name="Sekine M."/>
            <person name="Obayashi M."/>
            <person name="Nishi T."/>
            <person name="Shibahara T."/>
            <person name="Tanaka T."/>
            <person name="Ishii S."/>
            <person name="Yamamoto J."/>
            <person name="Saito K."/>
            <person name="Kawai Y."/>
            <person name="Isono Y."/>
            <person name="Nakamura Y."/>
            <person name="Nagahari K."/>
            <person name="Murakami K."/>
            <person name="Yasuda T."/>
            <person name="Iwayanagi T."/>
            <person name="Wagatsuma M."/>
            <person name="Shiratori A."/>
            <person name="Sudo H."/>
            <person name="Hosoiri T."/>
            <person name="Kaku Y."/>
            <person name="Kodaira H."/>
            <person name="Kondo H."/>
            <person name="Sugawara M."/>
            <person name="Takahashi M."/>
            <person name="Kanda K."/>
            <person name="Yokoi T."/>
            <person name="Furuya T."/>
            <person name="Kikkawa E."/>
            <person name="Omura Y."/>
            <person name="Abe K."/>
            <person name="Kamihara K."/>
            <person name="Katsuta N."/>
            <person name="Sato K."/>
            <person name="Tanikawa M."/>
            <person name="Yamazaki M."/>
            <person name="Ninomiya K."/>
            <person name="Ishibashi T."/>
            <person name="Yamashita H."/>
            <person name="Murakawa K."/>
            <person name="Fujimori K."/>
            <person name="Tanai H."/>
            <person name="Kimata M."/>
            <person name="Watanabe M."/>
            <person name="Hiraoka S."/>
            <person name="Chiba Y."/>
            <person name="Ishida S."/>
            <person name="Ono Y."/>
            <person name="Takiguchi S."/>
            <person name="Watanabe S."/>
            <person name="Yosida M."/>
            <person name="Hotuta T."/>
            <person name="Kusano J."/>
            <person name="Kanehori K."/>
            <person name="Takahashi-Fujii A."/>
            <person name="Hara H."/>
            <person name="Tanase T.-O."/>
            <person name="Nomura Y."/>
            <person name="Togiya S."/>
            <person name="Komai F."/>
            <person name="Hara R."/>
            <person name="Takeuchi K."/>
            <person name="Arita M."/>
            <person name="Imose N."/>
            <person name="Musashino K."/>
            <person name="Yuuki H."/>
            <person name="Oshima A."/>
            <person name="Sasaki N."/>
            <person name="Aotsuka S."/>
            <person name="Yoshikawa Y."/>
            <person name="Matsunawa H."/>
            <person name="Ichihara T."/>
            <person name="Shiohata N."/>
            <person name="Sano S."/>
            <person name="Moriya S."/>
            <person name="Momiyama H."/>
            <person name="Satoh N."/>
            <person name="Takami S."/>
            <person name="Terashima Y."/>
            <person name="Suzuki O."/>
            <person name="Nakagawa S."/>
            <person name="Senoh A."/>
            <person name="Mizoguchi H."/>
            <person name="Goto Y."/>
            <person name="Shimizu F."/>
            <person name="Wakebe H."/>
            <person name="Hishigaki H."/>
            <person name="Watanabe T."/>
            <person name="Sugiyama A."/>
            <person name="Takemoto M."/>
            <person name="Kawakami B."/>
            <person name="Yamazaki M."/>
            <person name="Watanabe K."/>
            <person name="Kumagai A."/>
            <person name="Itakura S."/>
            <person name="Fukuzumi Y."/>
            <person name="Fujimori Y."/>
            <person name="Komiyama M."/>
            <person name="Tashiro H."/>
            <person name="Tanigami A."/>
            <person name="Fujiwara T."/>
            <person name="Ono T."/>
            <person name="Yamada K."/>
            <person name="Fujii Y."/>
            <person name="Ozaki K."/>
            <person name="Hirao M."/>
            <person name="Ohmori Y."/>
            <person name="Kawabata A."/>
            <person name="Hikiji T."/>
            <person name="Kobatake N."/>
            <person name="Inagaki H."/>
            <person name="Ikema Y."/>
            <person name="Okamoto S."/>
            <person name="Okitani R."/>
            <person name="Kawakami T."/>
            <person name="Noguchi S."/>
            <person name="Itoh T."/>
            <person name="Shigeta K."/>
            <person name="Senba T."/>
            <person name="Matsumura K."/>
            <person name="Nakajima Y."/>
            <person name="Mizuno T."/>
            <person name="Morinaga M."/>
            <person name="Sasaki M."/>
            <person name="Togashi T."/>
            <person name="Oyama M."/>
            <person name="Hata H."/>
            <person name="Watanabe M."/>
            <person name="Komatsu T."/>
            <person name="Mizushima-Sugano J."/>
            <person name="Satoh T."/>
            <person name="Shirai Y."/>
            <person name="Takahashi Y."/>
            <person name="Nakagawa K."/>
            <person name="Okumura K."/>
            <person name="Nagase T."/>
            <person name="Nomura N."/>
            <person name="Kikuchi H."/>
            <person name="Masuho Y."/>
            <person name="Yamashita R."/>
            <person name="Nakai K."/>
            <person name="Yada T."/>
            <person name="Nakamura Y."/>
            <person name="Ohara O."/>
            <person name="Isogai T."/>
            <person name="Sugano S."/>
        </authorList>
    </citation>
    <scope>NUCLEOTIDE SEQUENCE [LARGE SCALE MRNA] (ISOFORM 2)</scope>
    <source>
        <tissue>Brain</tissue>
    </source>
</reference>
<reference key="3">
    <citation type="journal article" date="1999" name="Nature">
        <title>The DNA sequence of human chromosome 22.</title>
        <authorList>
            <person name="Dunham I."/>
            <person name="Hunt A.R."/>
            <person name="Collins J.E."/>
            <person name="Bruskiewich R."/>
            <person name="Beare D.M."/>
            <person name="Clamp M."/>
            <person name="Smink L.J."/>
            <person name="Ainscough R."/>
            <person name="Almeida J.P."/>
            <person name="Babbage A.K."/>
            <person name="Bagguley C."/>
            <person name="Bailey J."/>
            <person name="Barlow K.F."/>
            <person name="Bates K.N."/>
            <person name="Beasley O.P."/>
            <person name="Bird C.P."/>
            <person name="Blakey S.E."/>
            <person name="Bridgeman A.M."/>
            <person name="Buck D."/>
            <person name="Burgess J."/>
            <person name="Burrill W.D."/>
            <person name="Burton J."/>
            <person name="Carder C."/>
            <person name="Carter N.P."/>
            <person name="Chen Y."/>
            <person name="Clark G."/>
            <person name="Clegg S.M."/>
            <person name="Cobley V.E."/>
            <person name="Cole C.G."/>
            <person name="Collier R.E."/>
            <person name="Connor R."/>
            <person name="Conroy D."/>
            <person name="Corby N.R."/>
            <person name="Coville G.J."/>
            <person name="Cox A.V."/>
            <person name="Davis J."/>
            <person name="Dawson E."/>
            <person name="Dhami P.D."/>
            <person name="Dockree C."/>
            <person name="Dodsworth S.J."/>
            <person name="Durbin R.M."/>
            <person name="Ellington A.G."/>
            <person name="Evans K.L."/>
            <person name="Fey J.M."/>
            <person name="Fleming K."/>
            <person name="French L."/>
            <person name="Garner A.A."/>
            <person name="Gilbert J.G.R."/>
            <person name="Goward M.E."/>
            <person name="Grafham D.V."/>
            <person name="Griffiths M.N.D."/>
            <person name="Hall C."/>
            <person name="Hall R.E."/>
            <person name="Hall-Tamlyn G."/>
            <person name="Heathcott R.W."/>
            <person name="Ho S."/>
            <person name="Holmes S."/>
            <person name="Hunt S.E."/>
            <person name="Jones M.C."/>
            <person name="Kershaw J."/>
            <person name="Kimberley A.M."/>
            <person name="King A."/>
            <person name="Laird G.K."/>
            <person name="Langford C.F."/>
            <person name="Leversha M.A."/>
            <person name="Lloyd C."/>
            <person name="Lloyd D.M."/>
            <person name="Martyn I.D."/>
            <person name="Mashreghi-Mohammadi M."/>
            <person name="Matthews L.H."/>
            <person name="Mccann O.T."/>
            <person name="Mcclay J."/>
            <person name="Mclaren S."/>
            <person name="McMurray A.A."/>
            <person name="Milne S.A."/>
            <person name="Mortimore B.J."/>
            <person name="Odell C.N."/>
            <person name="Pavitt R."/>
            <person name="Pearce A.V."/>
            <person name="Pearson D."/>
            <person name="Phillimore B.J.C.T."/>
            <person name="Phillips S.H."/>
            <person name="Plumb R.W."/>
            <person name="Ramsay H."/>
            <person name="Ramsey Y."/>
            <person name="Rogers L."/>
            <person name="Ross M.T."/>
            <person name="Scott C.E."/>
            <person name="Sehra H.K."/>
            <person name="Skuce C.D."/>
            <person name="Smalley S."/>
            <person name="Smith M.L."/>
            <person name="Soderlund C."/>
            <person name="Spragon L."/>
            <person name="Steward C.A."/>
            <person name="Sulston J.E."/>
            <person name="Swann R.M."/>
            <person name="Vaudin M."/>
            <person name="Wall M."/>
            <person name="Wallis J.M."/>
            <person name="Whiteley M.N."/>
            <person name="Willey D.L."/>
            <person name="Williams L."/>
            <person name="Williams S.A."/>
            <person name="Williamson H."/>
            <person name="Wilmer T.E."/>
            <person name="Wilming L."/>
            <person name="Wright C.L."/>
            <person name="Hubbard T."/>
            <person name="Bentley D.R."/>
            <person name="Beck S."/>
            <person name="Rogers J."/>
            <person name="Shimizu N."/>
            <person name="Minoshima S."/>
            <person name="Kawasaki K."/>
            <person name="Sasaki T."/>
            <person name="Asakawa S."/>
            <person name="Kudoh J."/>
            <person name="Shintani A."/>
            <person name="Shibuya K."/>
            <person name="Yoshizaki Y."/>
            <person name="Aoki N."/>
            <person name="Mitsuyama S."/>
            <person name="Roe B.A."/>
            <person name="Chen F."/>
            <person name="Chu L."/>
            <person name="Crabtree J."/>
            <person name="Deschamps S."/>
            <person name="Do A."/>
            <person name="Do T."/>
            <person name="Dorman A."/>
            <person name="Fang F."/>
            <person name="Fu Y."/>
            <person name="Hu P."/>
            <person name="Hua A."/>
            <person name="Kenton S."/>
            <person name="Lai H."/>
            <person name="Lao H.I."/>
            <person name="Lewis J."/>
            <person name="Lewis S."/>
            <person name="Lin S.-P."/>
            <person name="Loh P."/>
            <person name="Malaj E."/>
            <person name="Nguyen T."/>
            <person name="Pan H."/>
            <person name="Phan S."/>
            <person name="Qi S."/>
            <person name="Qian Y."/>
            <person name="Ray L."/>
            <person name="Ren Q."/>
            <person name="Shaull S."/>
            <person name="Sloan D."/>
            <person name="Song L."/>
            <person name="Wang Q."/>
            <person name="Wang Y."/>
            <person name="Wang Z."/>
            <person name="White J."/>
            <person name="Willingham D."/>
            <person name="Wu H."/>
            <person name="Yao Z."/>
            <person name="Zhan M."/>
            <person name="Zhang G."/>
            <person name="Chissoe S."/>
            <person name="Murray J."/>
            <person name="Miller N."/>
            <person name="Minx P."/>
            <person name="Fulton R."/>
            <person name="Johnson D."/>
            <person name="Bemis G."/>
            <person name="Bentley D."/>
            <person name="Bradshaw H."/>
            <person name="Bourne S."/>
            <person name="Cordes M."/>
            <person name="Du Z."/>
            <person name="Fulton L."/>
            <person name="Goela D."/>
            <person name="Graves T."/>
            <person name="Hawkins J."/>
            <person name="Hinds K."/>
            <person name="Kemp K."/>
            <person name="Latreille P."/>
            <person name="Layman D."/>
            <person name="Ozersky P."/>
            <person name="Rohlfing T."/>
            <person name="Scheet P."/>
            <person name="Walker C."/>
            <person name="Wamsley A."/>
            <person name="Wohldmann P."/>
            <person name="Pepin K."/>
            <person name="Nelson J."/>
            <person name="Korf I."/>
            <person name="Bedell J.A."/>
            <person name="Hillier L.W."/>
            <person name="Mardis E."/>
            <person name="Waterston R."/>
            <person name="Wilson R."/>
            <person name="Emanuel B.S."/>
            <person name="Shaikh T."/>
            <person name="Kurahashi H."/>
            <person name="Saitta S."/>
            <person name="Budarf M.L."/>
            <person name="McDermid H.E."/>
            <person name="Johnson A."/>
            <person name="Wong A.C.C."/>
            <person name="Morrow B.E."/>
            <person name="Edelmann L."/>
            <person name="Kim U.J."/>
            <person name="Shizuya H."/>
            <person name="Simon M.I."/>
            <person name="Dumanski J.P."/>
            <person name="Peyrard M."/>
            <person name="Kedra D."/>
            <person name="Seroussi E."/>
            <person name="Fransson I."/>
            <person name="Tapia I."/>
            <person name="Bruder C.E."/>
            <person name="O'Brien K.P."/>
            <person name="Wilkinson P."/>
            <person name="Bodenteich A."/>
            <person name="Hartman K."/>
            <person name="Hu X."/>
            <person name="Khan A.S."/>
            <person name="Lane L."/>
            <person name="Tilahun Y."/>
            <person name="Wright H."/>
        </authorList>
    </citation>
    <scope>NUCLEOTIDE SEQUENCE [LARGE SCALE GENOMIC DNA]</scope>
</reference>
<feature type="chain" id="PRO_0000089466" description="Transmembrane protein 121B">
    <location>
        <begin position="1"/>
        <end position="578"/>
    </location>
</feature>
<feature type="region of interest" description="Disordered" evidence="2">
    <location>
        <begin position="1"/>
        <end position="84"/>
    </location>
</feature>
<feature type="region of interest" description="Disordered" evidence="2">
    <location>
        <begin position="106"/>
        <end position="129"/>
    </location>
</feature>
<feature type="region of interest" description="Disordered" evidence="2">
    <location>
        <begin position="529"/>
        <end position="557"/>
    </location>
</feature>
<feature type="compositionally biased region" description="Low complexity" evidence="2">
    <location>
        <begin position="8"/>
        <end position="17"/>
    </location>
</feature>
<feature type="compositionally biased region" description="Low complexity" evidence="2">
    <location>
        <begin position="44"/>
        <end position="53"/>
    </location>
</feature>
<feature type="compositionally biased region" description="Gly residues" evidence="2">
    <location>
        <begin position="54"/>
        <end position="67"/>
    </location>
</feature>
<feature type="compositionally biased region" description="Pro residues" evidence="2">
    <location>
        <begin position="538"/>
        <end position="549"/>
    </location>
</feature>
<feature type="modified residue" description="Phosphoserine" evidence="1">
    <location>
        <position position="167"/>
    </location>
</feature>
<feature type="modified residue" description="Phosphoserine" evidence="1">
    <location>
        <position position="552"/>
    </location>
</feature>
<feature type="splice variant" id="VSP_045398" description="In isoform 2." evidence="4">
    <location>
        <begin position="1"/>
        <end position="355"/>
    </location>
</feature>
<organism>
    <name type="scientific">Homo sapiens</name>
    <name type="common">Human</name>
    <dbReference type="NCBI Taxonomy" id="9606"/>
    <lineage>
        <taxon>Eukaryota</taxon>
        <taxon>Metazoa</taxon>
        <taxon>Chordata</taxon>
        <taxon>Craniata</taxon>
        <taxon>Vertebrata</taxon>
        <taxon>Euteleostomi</taxon>
        <taxon>Mammalia</taxon>
        <taxon>Eutheria</taxon>
        <taxon>Euarchontoglires</taxon>
        <taxon>Primates</taxon>
        <taxon>Haplorrhini</taxon>
        <taxon>Catarrhini</taxon>
        <taxon>Hominidae</taxon>
        <taxon>Homo</taxon>
    </lineage>
</organism>
<keyword id="KW-0025">Alternative splicing</keyword>
<keyword id="KW-0597">Phosphoprotein</keyword>
<keyword id="KW-1267">Proteomics identification</keyword>
<keyword id="KW-1185">Reference proteome</keyword>
<protein>
    <recommendedName>
        <fullName evidence="5">Transmembrane protein 121B</fullName>
    </recommendedName>
    <alternativeName>
        <fullName evidence="3">Cat eye syndrome critical region protein 6</fullName>
    </alternativeName>
</protein>
<comment type="alternative products">
    <event type="alternative splicing"/>
    <isoform>
        <id>Q9BXQ6-1</id>
        <name>1</name>
        <sequence type="displayed"/>
    </isoform>
    <isoform>
        <id>Q9BXQ6-2</id>
        <name>2</name>
        <sequence type="described" ref="VSP_045398"/>
    </isoform>
</comment>
<comment type="tissue specificity">
    <text>Widely expressed, especially in adult heart, brain, prostate, testes, peripherical blood leukocytes and fetal brain.</text>
</comment>
<comment type="miscellaneous">
    <text evidence="6">Candidate gene for the Cat Eye Syndrome (CES), a developmental disorder associated with the duplication of a 2 Mb region of 22q11.2. Duplication usually takes in the form of a surpernumerary bisatellited isodicentric chromosome, resulting in four copies of the region (represents an inv dup(22)(q11)). CES is characterized clinically by the combination of coloboma of the iris and anal atresia with fistula, downslanting palpebral fissures, preauricular tags and/or pits, frequent occurrence of heart and renal malformations, and normal or near-normal mental development.</text>
</comment>
<comment type="similarity">
    <text evidence="5">Belongs to the TMEM121 family.</text>
</comment>
<gene>
    <name evidence="7" type="primary">TMEM121B</name>
    <name evidence="3" type="synonym">CECR6</name>
</gene>
<name>T121B_HUMAN</name>
<sequence>MRPALGHPRSVSSASGSFPPPPAAARLQPLFLRGGSFRGRRGSGDSSTSTSTSRGGGGGRRGGGGGSPSSSTGAEREDDDESLSVSKPLVPNAALLGPPAQVGAPAGPAPVAFSSSAATSSSTSTPTSSCSMTAADFGGGAAAGAVGGPGSRSAGGAGGTGTGSGASCCPCCCCCGCPDRPGRRGRRRGCAPSPRCRWGYQALSVVLLLAQGGLLDLYLIAVTDLYWCSWIATDLVVVVGWAIFFAKNSRGRRGGAASGAHNHHLHHHHAAPPLHLPAPSAATAGAKARGARGGAGGAGGGLGAAAAAGEFAFAYLAWLIYSIAFTPKVVLILGTSILDLIELRAPFGTTGFRLTMALSVPLLYSLVRAISEAGAPPGSAGPLLLQPQRHRAAGCFLGTCLDLLDSFTLVELMLEGRVPLPAHLRYLLIAVYFLTLASPVLWLYELNAAAAAAASWGQASGPGSCSRLLRLLGGCLVDVPLLALRCLLVVSYQQPLSIFMLKNLFFLGCRGLEALEGCWDRGNRASPSRARGGYGAPPSAPPPPPPPPQGGSQLGHCISENEGGAHGYVNTLAVASQN</sequence>